<name>HEMH_PSEP7</name>
<reference key="1">
    <citation type="submission" date="2007-06" db="EMBL/GenBank/DDBJ databases">
        <authorList>
            <person name="Dodson R.J."/>
            <person name="Harkins D."/>
            <person name="Paulsen I.T."/>
        </authorList>
    </citation>
    <scope>NUCLEOTIDE SEQUENCE [LARGE SCALE GENOMIC DNA]</scope>
    <source>
        <strain>DSM 24068 / PA7</strain>
    </source>
</reference>
<feature type="chain" id="PRO_1000019344" description="Ferrochelatase">
    <location>
        <begin position="1"/>
        <end position="340"/>
    </location>
</feature>
<feature type="binding site" evidence="1">
    <location>
        <position position="189"/>
    </location>
    <ligand>
        <name>Fe cation</name>
        <dbReference type="ChEBI" id="CHEBI:24875"/>
    </ligand>
</feature>
<feature type="binding site" evidence="1">
    <location>
        <position position="292"/>
    </location>
    <ligand>
        <name>Fe cation</name>
        <dbReference type="ChEBI" id="CHEBI:24875"/>
    </ligand>
</feature>
<gene>
    <name evidence="1" type="primary">hemH</name>
    <name type="ordered locus">PSPA7_5304</name>
</gene>
<accession>A6VC51</accession>
<organism>
    <name type="scientific">Pseudomonas paraeruginosa (strain DSM 24068 / PA7)</name>
    <name type="common">Pseudomonas aeruginosa (strain PA7)</name>
    <dbReference type="NCBI Taxonomy" id="381754"/>
    <lineage>
        <taxon>Bacteria</taxon>
        <taxon>Pseudomonadati</taxon>
        <taxon>Pseudomonadota</taxon>
        <taxon>Gammaproteobacteria</taxon>
        <taxon>Pseudomonadales</taxon>
        <taxon>Pseudomonadaceae</taxon>
        <taxon>Pseudomonas</taxon>
        <taxon>Pseudomonas paraeruginosa</taxon>
    </lineage>
</organism>
<keyword id="KW-0963">Cytoplasm</keyword>
<keyword id="KW-0350">Heme biosynthesis</keyword>
<keyword id="KW-0408">Iron</keyword>
<keyword id="KW-0456">Lyase</keyword>
<keyword id="KW-0479">Metal-binding</keyword>
<keyword id="KW-0627">Porphyrin biosynthesis</keyword>
<protein>
    <recommendedName>
        <fullName evidence="1">Ferrochelatase</fullName>
        <ecNumber evidence="1">4.98.1.1</ecNumber>
    </recommendedName>
    <alternativeName>
        <fullName evidence="1">Heme synthase</fullName>
    </alternativeName>
    <alternativeName>
        <fullName evidence="1">Protoheme ferro-lyase</fullName>
    </alternativeName>
</protein>
<proteinExistence type="inferred from homology"/>
<sequence length="340" mass="38551">MTENALLLLNLGSPDSTRVEDVRRYLDQFLMDPYVVDLPWPLRRLLVSLILVKRPAESAHAYSSIWWDEGSPLIVLSRRLQEAIKPHWPHGPVELAMRYGQPAIEKVLLDLARRGIRRVTLAPLYPQFADSTTTTAEQEVRRVIAAHRLELEVSTLPPFYDQPVYLDALVESVHPYLQQPHDHLLLSFHGLPERHIRKLVKDPAHDLLAESSRNVSPEALALCYRSQCLRTAEAFAERAGLEQGRWSVSFQSRLGRAKWIEPYTDAKLDELVQRGVKRLLVMCPAFVADCIETLEEIGMRGREQFISAGGEDLVLIPCLNDHPAWVGALADMSGRLARPL</sequence>
<dbReference type="EC" id="4.98.1.1" evidence="1"/>
<dbReference type="EMBL" id="CP000744">
    <property type="protein sequence ID" value="ABR85109.1"/>
    <property type="molecule type" value="Genomic_DNA"/>
</dbReference>
<dbReference type="RefSeq" id="WP_003149922.1">
    <property type="nucleotide sequence ID" value="NC_009656.1"/>
</dbReference>
<dbReference type="SMR" id="A6VC51"/>
<dbReference type="KEGG" id="pap:PSPA7_5304"/>
<dbReference type="HOGENOM" id="CLU_018884_0_1_6"/>
<dbReference type="UniPathway" id="UPA00252">
    <property type="reaction ID" value="UER00325"/>
</dbReference>
<dbReference type="Proteomes" id="UP000001582">
    <property type="component" value="Chromosome"/>
</dbReference>
<dbReference type="GO" id="GO:0005737">
    <property type="term" value="C:cytoplasm"/>
    <property type="evidence" value="ECO:0007669"/>
    <property type="project" value="UniProtKB-SubCell"/>
</dbReference>
<dbReference type="GO" id="GO:0004325">
    <property type="term" value="F:ferrochelatase activity"/>
    <property type="evidence" value="ECO:0007669"/>
    <property type="project" value="UniProtKB-UniRule"/>
</dbReference>
<dbReference type="GO" id="GO:0046872">
    <property type="term" value="F:metal ion binding"/>
    <property type="evidence" value="ECO:0007669"/>
    <property type="project" value="UniProtKB-KW"/>
</dbReference>
<dbReference type="GO" id="GO:0006783">
    <property type="term" value="P:heme biosynthetic process"/>
    <property type="evidence" value="ECO:0007669"/>
    <property type="project" value="UniProtKB-UniRule"/>
</dbReference>
<dbReference type="CDD" id="cd00419">
    <property type="entry name" value="Ferrochelatase_C"/>
    <property type="match status" value="1"/>
</dbReference>
<dbReference type="CDD" id="cd03411">
    <property type="entry name" value="Ferrochelatase_N"/>
    <property type="match status" value="1"/>
</dbReference>
<dbReference type="FunFam" id="3.40.50.1400:FF:000012">
    <property type="entry name" value="Ferrochelatase"/>
    <property type="match status" value="1"/>
</dbReference>
<dbReference type="Gene3D" id="3.40.50.1400">
    <property type="match status" value="2"/>
</dbReference>
<dbReference type="HAMAP" id="MF_00323">
    <property type="entry name" value="Ferrochelatase"/>
    <property type="match status" value="1"/>
</dbReference>
<dbReference type="InterPro" id="IPR001015">
    <property type="entry name" value="Ferrochelatase"/>
</dbReference>
<dbReference type="InterPro" id="IPR033644">
    <property type="entry name" value="Ferrochelatase_C"/>
</dbReference>
<dbReference type="InterPro" id="IPR033659">
    <property type="entry name" value="Ferrochelatase_N"/>
</dbReference>
<dbReference type="NCBIfam" id="TIGR00109">
    <property type="entry name" value="hemH"/>
    <property type="match status" value="1"/>
</dbReference>
<dbReference type="PANTHER" id="PTHR11108">
    <property type="entry name" value="FERROCHELATASE"/>
    <property type="match status" value="1"/>
</dbReference>
<dbReference type="PANTHER" id="PTHR11108:SF1">
    <property type="entry name" value="FERROCHELATASE, MITOCHONDRIAL"/>
    <property type="match status" value="1"/>
</dbReference>
<dbReference type="Pfam" id="PF00762">
    <property type="entry name" value="Ferrochelatase"/>
    <property type="match status" value="1"/>
</dbReference>
<dbReference type="SUPFAM" id="SSF53800">
    <property type="entry name" value="Chelatase"/>
    <property type="match status" value="1"/>
</dbReference>
<comment type="function">
    <text evidence="1">Catalyzes the ferrous insertion into protoporphyrin IX.</text>
</comment>
<comment type="catalytic activity">
    <reaction evidence="1">
        <text>heme b + 2 H(+) = protoporphyrin IX + Fe(2+)</text>
        <dbReference type="Rhea" id="RHEA:22584"/>
        <dbReference type="ChEBI" id="CHEBI:15378"/>
        <dbReference type="ChEBI" id="CHEBI:29033"/>
        <dbReference type="ChEBI" id="CHEBI:57306"/>
        <dbReference type="ChEBI" id="CHEBI:60344"/>
        <dbReference type="EC" id="4.98.1.1"/>
    </reaction>
</comment>
<comment type="pathway">
    <text evidence="1">Porphyrin-containing compound metabolism; protoheme biosynthesis; protoheme from protoporphyrin-IX: step 1/1.</text>
</comment>
<comment type="subcellular location">
    <subcellularLocation>
        <location evidence="1">Cytoplasm</location>
    </subcellularLocation>
</comment>
<comment type="similarity">
    <text evidence="1">Belongs to the ferrochelatase family.</text>
</comment>
<evidence type="ECO:0000255" key="1">
    <source>
        <dbReference type="HAMAP-Rule" id="MF_00323"/>
    </source>
</evidence>